<sequence length="381" mass="43551">MVQILHISDTHLGKRQYSLVEREKDIYDIFSQLVDIAIKEHVDVIIHSGDLFDVSSPTTNALVMAIKILKRLKDVNIPFLSIPGDHDTPKRKGYLIPHNILSELDLIKILNYEKPYIIKGIEVYGIPHIPTVSKSILVSALSALRPKSSRSILLLHQGVKQILPYDGSWQMELGSLPKGFGYYALGHIHTRWRLTQDDGSVIAIAGSPDIMREEEIEGYEKFGKGAYLIDFSKDLPILSTINITVRPQKVVTINTKNIKKDILTIRDDLIEHNKSENNKPILHIIVEGERMRKDLLYKELLPLNDVALYYRIYKDETTQTVDNLSYTLPRDKGLDKIIIEYLTKYEKFSEDEANLILQMIKNVESDEIVNEILKKLTGVNL</sequence>
<protein>
    <recommendedName>
        <fullName evidence="1">DNA double-strand break repair protein Mre11</fullName>
        <ecNumber evidence="1">3.1.-.-</ecNumber>
    </recommendedName>
</protein>
<evidence type="ECO:0000255" key="1">
    <source>
        <dbReference type="HAMAP-Rule" id="MF_02044"/>
    </source>
</evidence>
<proteinExistence type="inferred from homology"/>
<keyword id="KW-0227">DNA damage</keyword>
<keyword id="KW-0234">DNA repair</keyword>
<keyword id="KW-0255">Endonuclease</keyword>
<keyword id="KW-0269">Exonuclease</keyword>
<keyword id="KW-0378">Hydrolase</keyword>
<keyword id="KW-0464">Manganese</keyword>
<keyword id="KW-0479">Metal-binding</keyword>
<keyword id="KW-0540">Nuclease</keyword>
<keyword id="KW-1185">Reference proteome</keyword>
<feature type="chain" id="PRO_0000138699" description="DNA double-strand break repair protein Mre11">
    <location>
        <begin position="1"/>
        <end position="381"/>
    </location>
</feature>
<feature type="active site" description="Proton donor" evidence="1">
    <location>
        <position position="86"/>
    </location>
</feature>
<feature type="binding site" evidence="1">
    <location>
        <position position="9"/>
    </location>
    <ligand>
        <name>Mn(2+)</name>
        <dbReference type="ChEBI" id="CHEBI:29035"/>
        <label>1</label>
    </ligand>
</feature>
<feature type="binding site" evidence="1">
    <location>
        <position position="11"/>
    </location>
    <ligand>
        <name>Mn(2+)</name>
        <dbReference type="ChEBI" id="CHEBI:29035"/>
        <label>1</label>
    </ligand>
</feature>
<feature type="binding site" evidence="1">
    <location>
        <position position="50"/>
    </location>
    <ligand>
        <name>Mn(2+)</name>
        <dbReference type="ChEBI" id="CHEBI:29035"/>
        <label>1</label>
    </ligand>
</feature>
<feature type="binding site" evidence="1">
    <location>
        <position position="50"/>
    </location>
    <ligand>
        <name>Mn(2+)</name>
        <dbReference type="ChEBI" id="CHEBI:29035"/>
        <label>2</label>
    </ligand>
</feature>
<feature type="binding site" evidence="1">
    <location>
        <position position="85"/>
    </location>
    <ligand>
        <name>Mn(2+)</name>
        <dbReference type="ChEBI" id="CHEBI:29035"/>
        <label>2</label>
    </ligand>
</feature>
<feature type="binding site" evidence="1">
    <location>
        <position position="156"/>
    </location>
    <ligand>
        <name>Mn(2+)</name>
        <dbReference type="ChEBI" id="CHEBI:29035"/>
        <label>2</label>
    </ligand>
</feature>
<feature type="binding site" evidence="1">
    <location>
        <position position="187"/>
    </location>
    <ligand>
        <name>Mn(2+)</name>
        <dbReference type="ChEBI" id="CHEBI:29035"/>
        <label>2</label>
    </ligand>
</feature>
<feature type="binding site" evidence="1">
    <location>
        <position position="189"/>
    </location>
    <ligand>
        <name>Mn(2+)</name>
        <dbReference type="ChEBI" id="CHEBI:29035"/>
        <label>1</label>
    </ligand>
</feature>
<organism>
    <name type="scientific">Saccharolobus solfataricus (strain ATCC 35092 / DSM 1617 / JCM 11322 / P2)</name>
    <name type="common">Sulfolobus solfataricus</name>
    <dbReference type="NCBI Taxonomy" id="273057"/>
    <lineage>
        <taxon>Archaea</taxon>
        <taxon>Thermoproteota</taxon>
        <taxon>Thermoprotei</taxon>
        <taxon>Sulfolobales</taxon>
        <taxon>Sulfolobaceae</taxon>
        <taxon>Saccharolobus</taxon>
    </lineage>
</organism>
<comment type="function">
    <text evidence="1">Part of the Rad50/Mre11 complex, which is involved in the early steps of DNA double-strand break (DSB) repair. The complex may facilitate opening of the processed DNA ends to aid in the recruitment of HerA and NurA. Mre11 binds to DSB ends and has both double-stranded 3'-5' exonuclease activity and single-stranded endonuclease activity.</text>
</comment>
<comment type="cofactor">
    <cofactor evidence="1">
        <name>Mn(2+)</name>
        <dbReference type="ChEBI" id="CHEBI:29035"/>
    </cofactor>
    <text evidence="1">Binds 2 manganese ions per subunit.</text>
</comment>
<comment type="activity regulation">
    <text evidence="1">Nuclease activity is regulated by Rad50.</text>
</comment>
<comment type="subunit">
    <text evidence="1">Homodimer. Forms a heterotetramer composed of two Mre11 subunits and two Rad50 subunits.</text>
</comment>
<comment type="similarity">
    <text evidence="1">Belongs to the MRE11/RAD32 family.</text>
</comment>
<name>MRE11_SACS2</name>
<dbReference type="EC" id="3.1.-.-" evidence="1"/>
<dbReference type="EMBL" id="AE006641">
    <property type="protein sequence ID" value="AAK42418.1"/>
    <property type="molecule type" value="Genomic_DNA"/>
</dbReference>
<dbReference type="PIR" id="C90395">
    <property type="entry name" value="C90395"/>
</dbReference>
<dbReference type="RefSeq" id="WP_009991541.1">
    <property type="nucleotide sequence ID" value="NC_002754.1"/>
</dbReference>
<dbReference type="SMR" id="Q97WG9"/>
<dbReference type="STRING" id="273057.SSO2250"/>
<dbReference type="PaxDb" id="273057-SSO2250"/>
<dbReference type="EnsemblBacteria" id="AAK42418">
    <property type="protein sequence ID" value="AAK42418"/>
    <property type="gene ID" value="SSO2250"/>
</dbReference>
<dbReference type="GeneID" id="44127984"/>
<dbReference type="KEGG" id="sso:SSO2250"/>
<dbReference type="PATRIC" id="fig|273057.12.peg.2345"/>
<dbReference type="eggNOG" id="arCOG00397">
    <property type="taxonomic scope" value="Archaea"/>
</dbReference>
<dbReference type="HOGENOM" id="CLU_026621_5_2_2"/>
<dbReference type="InParanoid" id="Q97WG9"/>
<dbReference type="PhylomeDB" id="Q97WG9"/>
<dbReference type="Proteomes" id="UP000001974">
    <property type="component" value="Chromosome"/>
</dbReference>
<dbReference type="GO" id="GO:0008408">
    <property type="term" value="F:3'-5' exonuclease activity"/>
    <property type="evidence" value="ECO:0007669"/>
    <property type="project" value="UniProtKB-UniRule"/>
</dbReference>
<dbReference type="GO" id="GO:0003677">
    <property type="term" value="F:DNA binding"/>
    <property type="evidence" value="ECO:0000318"/>
    <property type="project" value="GO_Central"/>
</dbReference>
<dbReference type="GO" id="GO:0045027">
    <property type="term" value="F:DNA end binding"/>
    <property type="evidence" value="ECO:0007669"/>
    <property type="project" value="UniProtKB-UniRule"/>
</dbReference>
<dbReference type="GO" id="GO:0004529">
    <property type="term" value="F:DNA exonuclease activity"/>
    <property type="evidence" value="ECO:0000318"/>
    <property type="project" value="GO_Central"/>
</dbReference>
<dbReference type="GO" id="GO:0004519">
    <property type="term" value="F:endonuclease activity"/>
    <property type="evidence" value="ECO:0007669"/>
    <property type="project" value="UniProtKB-UniRule"/>
</dbReference>
<dbReference type="GO" id="GO:0030145">
    <property type="term" value="F:manganese ion binding"/>
    <property type="evidence" value="ECO:0007669"/>
    <property type="project" value="UniProtKB-UniRule"/>
</dbReference>
<dbReference type="GO" id="GO:0000403">
    <property type="term" value="F:Y-form DNA binding"/>
    <property type="evidence" value="ECO:0007669"/>
    <property type="project" value="UniProtKB-UniRule"/>
</dbReference>
<dbReference type="GO" id="GO:0006281">
    <property type="term" value="P:DNA repair"/>
    <property type="evidence" value="ECO:0000318"/>
    <property type="project" value="GO_Central"/>
</dbReference>
<dbReference type="GO" id="GO:0006302">
    <property type="term" value="P:double-strand break repair"/>
    <property type="evidence" value="ECO:0007669"/>
    <property type="project" value="UniProtKB-UniRule"/>
</dbReference>
<dbReference type="CDD" id="cd00840">
    <property type="entry name" value="MPP_Mre11_N"/>
    <property type="match status" value="1"/>
</dbReference>
<dbReference type="FunFam" id="3.60.21.10:FF:000129">
    <property type="entry name" value="DNA double-strand break repair protein Mre11"/>
    <property type="match status" value="1"/>
</dbReference>
<dbReference type="Gene3D" id="3.60.21.10">
    <property type="match status" value="1"/>
</dbReference>
<dbReference type="HAMAP" id="MF_02044">
    <property type="entry name" value="Mre11"/>
    <property type="match status" value="1"/>
</dbReference>
<dbReference type="InterPro" id="IPR004843">
    <property type="entry name" value="Calcineurin-like_PHP_ApaH"/>
</dbReference>
<dbReference type="InterPro" id="IPR050535">
    <property type="entry name" value="DNA_Repair-Maintenance_Comp"/>
</dbReference>
<dbReference type="InterPro" id="IPR053459">
    <property type="entry name" value="DSB_Repair_Mre11/Rad50"/>
</dbReference>
<dbReference type="InterPro" id="IPR029052">
    <property type="entry name" value="Metallo-depent_PP-like"/>
</dbReference>
<dbReference type="InterPro" id="IPR032885">
    <property type="entry name" value="Mre11_archaea-type"/>
</dbReference>
<dbReference type="InterPro" id="IPR041796">
    <property type="entry name" value="Mre11_N"/>
</dbReference>
<dbReference type="NCBIfam" id="NF041031">
    <property type="entry name" value="Mre11_Sulfo"/>
    <property type="match status" value="1"/>
</dbReference>
<dbReference type="PANTHER" id="PTHR30337">
    <property type="entry name" value="COMPONENT OF ATP-DEPENDENT DSDNA EXONUCLEASE"/>
    <property type="match status" value="1"/>
</dbReference>
<dbReference type="PANTHER" id="PTHR30337:SF0">
    <property type="entry name" value="NUCLEASE SBCCD SUBUNIT D"/>
    <property type="match status" value="1"/>
</dbReference>
<dbReference type="Pfam" id="PF00149">
    <property type="entry name" value="Metallophos"/>
    <property type="match status" value="1"/>
</dbReference>
<dbReference type="SUPFAM" id="SSF56300">
    <property type="entry name" value="Metallo-dependent phosphatases"/>
    <property type="match status" value="1"/>
</dbReference>
<accession>Q97WG9</accession>
<gene>
    <name evidence="1" type="primary">mre11</name>
    <name type="synonym">rad32</name>
    <name type="ordered locus">SSO2250</name>
</gene>
<reference key="1">
    <citation type="journal article" date="2001" name="Proc. Natl. Acad. Sci. U.S.A.">
        <title>The complete genome of the crenarchaeon Sulfolobus solfataricus P2.</title>
        <authorList>
            <person name="She Q."/>
            <person name="Singh R.K."/>
            <person name="Confalonieri F."/>
            <person name="Zivanovic Y."/>
            <person name="Allard G."/>
            <person name="Awayez M.J."/>
            <person name="Chan-Weiher C.C.-Y."/>
            <person name="Clausen I.G."/>
            <person name="Curtis B.A."/>
            <person name="De Moors A."/>
            <person name="Erauso G."/>
            <person name="Fletcher C."/>
            <person name="Gordon P.M.K."/>
            <person name="Heikamp-de Jong I."/>
            <person name="Jeffries A.C."/>
            <person name="Kozera C.J."/>
            <person name="Medina N."/>
            <person name="Peng X."/>
            <person name="Thi-Ngoc H.P."/>
            <person name="Redder P."/>
            <person name="Schenk M.E."/>
            <person name="Theriault C."/>
            <person name="Tolstrup N."/>
            <person name="Charlebois R.L."/>
            <person name="Doolittle W.F."/>
            <person name="Duguet M."/>
            <person name="Gaasterland T."/>
            <person name="Garrett R.A."/>
            <person name="Ragan M.A."/>
            <person name="Sensen C.W."/>
            <person name="Van der Oost J."/>
        </authorList>
    </citation>
    <scope>NUCLEOTIDE SEQUENCE [LARGE SCALE GENOMIC DNA]</scope>
    <source>
        <strain>ATCC 35092 / DSM 1617 / JCM 11322 / P2</strain>
    </source>
</reference>